<reference key="1">
    <citation type="submission" date="2005-09" db="EMBL/GenBank/DDBJ databases">
        <title>Complete sequence of chromosome 1 of Rhodobacter sphaeroides 2.4.1.</title>
        <authorList>
            <person name="Copeland A."/>
            <person name="Lucas S."/>
            <person name="Lapidus A."/>
            <person name="Barry K."/>
            <person name="Detter J.C."/>
            <person name="Glavina T."/>
            <person name="Hammon N."/>
            <person name="Israni S."/>
            <person name="Pitluck S."/>
            <person name="Richardson P."/>
            <person name="Mackenzie C."/>
            <person name="Choudhary M."/>
            <person name="Larimer F."/>
            <person name="Hauser L.J."/>
            <person name="Land M."/>
            <person name="Donohue T.J."/>
            <person name="Kaplan S."/>
        </authorList>
    </citation>
    <scope>NUCLEOTIDE SEQUENCE [LARGE SCALE GENOMIC DNA]</scope>
    <source>
        <strain>ATCC 17023 / DSM 158 / JCM 6121 / CCUG 31486 / LMG 2827 / NBRC 12203 / NCIMB 8253 / ATH 2.4.1.</strain>
    </source>
</reference>
<feature type="chain" id="PRO_0000231253" description="UDP-N-acetylglucosamine 1-carboxyvinyltransferase">
    <location>
        <begin position="1"/>
        <end position="422"/>
    </location>
</feature>
<feature type="active site" description="Proton donor" evidence="1">
    <location>
        <position position="118"/>
    </location>
</feature>
<feature type="binding site" evidence="1">
    <location>
        <begin position="22"/>
        <end position="23"/>
    </location>
    <ligand>
        <name>phosphoenolpyruvate</name>
        <dbReference type="ChEBI" id="CHEBI:58702"/>
    </ligand>
</feature>
<feature type="binding site" evidence="1">
    <location>
        <position position="94"/>
    </location>
    <ligand>
        <name>UDP-N-acetyl-alpha-D-glucosamine</name>
        <dbReference type="ChEBI" id="CHEBI:57705"/>
    </ligand>
</feature>
<feature type="binding site" evidence="1">
    <location>
        <begin position="123"/>
        <end position="127"/>
    </location>
    <ligand>
        <name>UDP-N-acetyl-alpha-D-glucosamine</name>
        <dbReference type="ChEBI" id="CHEBI:57705"/>
    </ligand>
</feature>
<feature type="binding site" evidence="1">
    <location>
        <position position="309"/>
    </location>
    <ligand>
        <name>UDP-N-acetyl-alpha-D-glucosamine</name>
        <dbReference type="ChEBI" id="CHEBI:57705"/>
    </ligand>
</feature>
<feature type="binding site" evidence="1">
    <location>
        <position position="331"/>
    </location>
    <ligand>
        <name>UDP-N-acetyl-alpha-D-glucosamine</name>
        <dbReference type="ChEBI" id="CHEBI:57705"/>
    </ligand>
</feature>
<feature type="modified residue" description="2-(S-cysteinyl)pyruvic acid O-phosphothioketal" evidence="1">
    <location>
        <position position="118"/>
    </location>
</feature>
<protein>
    <recommendedName>
        <fullName evidence="1">UDP-N-acetylglucosamine 1-carboxyvinyltransferase</fullName>
        <ecNumber evidence="1">2.5.1.7</ecNumber>
    </recommendedName>
    <alternativeName>
        <fullName evidence="1">Enoylpyruvate transferase</fullName>
    </alternativeName>
    <alternativeName>
        <fullName evidence="1">UDP-N-acetylglucosamine enolpyruvyl transferase</fullName>
        <shortName evidence="1">EPT</shortName>
    </alternativeName>
</protein>
<name>MURA_CERS4</name>
<sequence length="422" mass="44583">MDSILVKGNGELRGQIPIAGAKNACLALMPATLLSDEPLTLTNAPRLSDIRTMTQLLQSLGAEVASLQGGQVLALSSHALTDHRADYDIVRKMRASILVLGPMLARDGHAVVSLPGGCAIGARPVDLHLKALEAMGAELDLRDGYIHAKAPAGGLKGARVVFPLVSVGATENALMAATLAKGTTVLENAAREPEIVDLARCLRRMGAQIEGEGSSIMTIQGVDRLGGATHPVVTDRIELGTYMLAPAICGGEVELLGGRIELVGAFCEKLDAAGISVEETERGLRVARRNGRVKAVDVMTEPFPGFPTDLQAQMMALLCTAEGTSVLEERIFENRFMHAPELIRMGARIEVHGGTATVTGVEKLRGAPVMATDLRASVSLILAGLAAEGETIVSRVYHLDRGYERVEEKLSACGAQIRRIPG</sequence>
<gene>
    <name evidence="1" type="primary">murA</name>
    <name type="ordered locus">RHOS4_22390</name>
    <name type="ORF">RSP_0633</name>
</gene>
<comment type="function">
    <text evidence="1">Cell wall formation. Adds enolpyruvyl to UDP-N-acetylglucosamine.</text>
</comment>
<comment type="catalytic activity">
    <reaction evidence="1">
        <text>phosphoenolpyruvate + UDP-N-acetyl-alpha-D-glucosamine = UDP-N-acetyl-3-O-(1-carboxyvinyl)-alpha-D-glucosamine + phosphate</text>
        <dbReference type="Rhea" id="RHEA:18681"/>
        <dbReference type="ChEBI" id="CHEBI:43474"/>
        <dbReference type="ChEBI" id="CHEBI:57705"/>
        <dbReference type="ChEBI" id="CHEBI:58702"/>
        <dbReference type="ChEBI" id="CHEBI:68483"/>
        <dbReference type="EC" id="2.5.1.7"/>
    </reaction>
</comment>
<comment type="pathway">
    <text evidence="1">Cell wall biogenesis; peptidoglycan biosynthesis.</text>
</comment>
<comment type="subcellular location">
    <subcellularLocation>
        <location evidence="1">Cytoplasm</location>
    </subcellularLocation>
</comment>
<comment type="similarity">
    <text evidence="1">Belongs to the EPSP synthase family. MurA subfamily.</text>
</comment>
<dbReference type="EC" id="2.5.1.7" evidence="1"/>
<dbReference type="EMBL" id="CP000143">
    <property type="protein sequence ID" value="ABA79807.1"/>
    <property type="molecule type" value="Genomic_DNA"/>
</dbReference>
<dbReference type="RefSeq" id="WP_002720800.1">
    <property type="nucleotide sequence ID" value="NZ_CP030271.1"/>
</dbReference>
<dbReference type="RefSeq" id="YP_353708.1">
    <property type="nucleotide sequence ID" value="NC_007493.2"/>
</dbReference>
<dbReference type="SMR" id="Q3J077"/>
<dbReference type="STRING" id="272943.RSP_0633"/>
<dbReference type="EnsemblBacteria" id="ABA79807">
    <property type="protein sequence ID" value="ABA79807"/>
    <property type="gene ID" value="RSP_0633"/>
</dbReference>
<dbReference type="GeneID" id="3718262"/>
<dbReference type="KEGG" id="rsp:RSP_0633"/>
<dbReference type="PATRIC" id="fig|272943.9.peg.2581"/>
<dbReference type="eggNOG" id="COG0766">
    <property type="taxonomic scope" value="Bacteria"/>
</dbReference>
<dbReference type="OrthoDB" id="9803760at2"/>
<dbReference type="PhylomeDB" id="Q3J077"/>
<dbReference type="UniPathway" id="UPA00219"/>
<dbReference type="Proteomes" id="UP000002703">
    <property type="component" value="Chromosome 1"/>
</dbReference>
<dbReference type="GO" id="GO:0005737">
    <property type="term" value="C:cytoplasm"/>
    <property type="evidence" value="ECO:0007669"/>
    <property type="project" value="UniProtKB-SubCell"/>
</dbReference>
<dbReference type="GO" id="GO:0008760">
    <property type="term" value="F:UDP-N-acetylglucosamine 1-carboxyvinyltransferase activity"/>
    <property type="evidence" value="ECO:0007669"/>
    <property type="project" value="UniProtKB-UniRule"/>
</dbReference>
<dbReference type="GO" id="GO:0051301">
    <property type="term" value="P:cell division"/>
    <property type="evidence" value="ECO:0007669"/>
    <property type="project" value="UniProtKB-KW"/>
</dbReference>
<dbReference type="GO" id="GO:0071555">
    <property type="term" value="P:cell wall organization"/>
    <property type="evidence" value="ECO:0007669"/>
    <property type="project" value="UniProtKB-KW"/>
</dbReference>
<dbReference type="GO" id="GO:0009252">
    <property type="term" value="P:peptidoglycan biosynthetic process"/>
    <property type="evidence" value="ECO:0007669"/>
    <property type="project" value="UniProtKB-UniRule"/>
</dbReference>
<dbReference type="GO" id="GO:0008360">
    <property type="term" value="P:regulation of cell shape"/>
    <property type="evidence" value="ECO:0007669"/>
    <property type="project" value="UniProtKB-KW"/>
</dbReference>
<dbReference type="GO" id="GO:0019277">
    <property type="term" value="P:UDP-N-acetylgalactosamine biosynthetic process"/>
    <property type="evidence" value="ECO:0007669"/>
    <property type="project" value="InterPro"/>
</dbReference>
<dbReference type="CDD" id="cd01555">
    <property type="entry name" value="UdpNAET"/>
    <property type="match status" value="1"/>
</dbReference>
<dbReference type="FunFam" id="3.65.10.10:FF:000001">
    <property type="entry name" value="UDP-N-acetylglucosamine 1-carboxyvinyltransferase"/>
    <property type="match status" value="1"/>
</dbReference>
<dbReference type="Gene3D" id="3.65.10.10">
    <property type="entry name" value="Enolpyruvate transferase domain"/>
    <property type="match status" value="2"/>
</dbReference>
<dbReference type="HAMAP" id="MF_00111">
    <property type="entry name" value="MurA"/>
    <property type="match status" value="1"/>
</dbReference>
<dbReference type="InterPro" id="IPR001986">
    <property type="entry name" value="Enolpyruvate_Tfrase_dom"/>
</dbReference>
<dbReference type="InterPro" id="IPR036968">
    <property type="entry name" value="Enolpyruvate_Tfrase_sf"/>
</dbReference>
<dbReference type="InterPro" id="IPR050068">
    <property type="entry name" value="MurA_subfamily"/>
</dbReference>
<dbReference type="InterPro" id="IPR013792">
    <property type="entry name" value="RNA3'P_cycl/enolpyr_Trfase_a/b"/>
</dbReference>
<dbReference type="InterPro" id="IPR005750">
    <property type="entry name" value="UDP_GlcNAc_COvinyl_MurA"/>
</dbReference>
<dbReference type="NCBIfam" id="TIGR01072">
    <property type="entry name" value="murA"/>
    <property type="match status" value="1"/>
</dbReference>
<dbReference type="NCBIfam" id="NF006873">
    <property type="entry name" value="PRK09369.1"/>
    <property type="match status" value="1"/>
</dbReference>
<dbReference type="PANTHER" id="PTHR43783">
    <property type="entry name" value="UDP-N-ACETYLGLUCOSAMINE 1-CARBOXYVINYLTRANSFERASE"/>
    <property type="match status" value="1"/>
</dbReference>
<dbReference type="PANTHER" id="PTHR43783:SF1">
    <property type="entry name" value="UDP-N-ACETYLGLUCOSAMINE 1-CARBOXYVINYLTRANSFERASE"/>
    <property type="match status" value="1"/>
</dbReference>
<dbReference type="Pfam" id="PF00275">
    <property type="entry name" value="EPSP_synthase"/>
    <property type="match status" value="1"/>
</dbReference>
<dbReference type="SUPFAM" id="SSF55205">
    <property type="entry name" value="EPT/RTPC-like"/>
    <property type="match status" value="1"/>
</dbReference>
<accession>Q3J077</accession>
<organism>
    <name type="scientific">Cereibacter sphaeroides (strain ATCC 17023 / DSM 158 / JCM 6121 / CCUG 31486 / LMG 2827 / NBRC 12203 / NCIMB 8253 / ATH 2.4.1.)</name>
    <name type="common">Rhodobacter sphaeroides</name>
    <dbReference type="NCBI Taxonomy" id="272943"/>
    <lineage>
        <taxon>Bacteria</taxon>
        <taxon>Pseudomonadati</taxon>
        <taxon>Pseudomonadota</taxon>
        <taxon>Alphaproteobacteria</taxon>
        <taxon>Rhodobacterales</taxon>
        <taxon>Paracoccaceae</taxon>
        <taxon>Cereibacter</taxon>
    </lineage>
</organism>
<proteinExistence type="inferred from homology"/>
<evidence type="ECO:0000255" key="1">
    <source>
        <dbReference type="HAMAP-Rule" id="MF_00111"/>
    </source>
</evidence>
<keyword id="KW-0131">Cell cycle</keyword>
<keyword id="KW-0132">Cell division</keyword>
<keyword id="KW-0133">Cell shape</keyword>
<keyword id="KW-0961">Cell wall biogenesis/degradation</keyword>
<keyword id="KW-0963">Cytoplasm</keyword>
<keyword id="KW-0573">Peptidoglycan synthesis</keyword>
<keyword id="KW-0670">Pyruvate</keyword>
<keyword id="KW-1185">Reference proteome</keyword>
<keyword id="KW-0808">Transferase</keyword>